<organism>
    <name type="scientific">Escherichia coli O8 (strain IAI1)</name>
    <dbReference type="NCBI Taxonomy" id="585034"/>
    <lineage>
        <taxon>Bacteria</taxon>
        <taxon>Pseudomonadati</taxon>
        <taxon>Pseudomonadota</taxon>
        <taxon>Gammaproteobacteria</taxon>
        <taxon>Enterobacterales</taxon>
        <taxon>Enterobacteriaceae</taxon>
        <taxon>Escherichia</taxon>
    </lineage>
</organism>
<keyword id="KW-0687">Ribonucleoprotein</keyword>
<keyword id="KW-0689">Ribosomal protein</keyword>
<keyword id="KW-0694">RNA-binding</keyword>
<keyword id="KW-0699">rRNA-binding</keyword>
<evidence type="ECO:0000255" key="1">
    <source>
        <dbReference type="HAMAP-Rule" id="MF_01331"/>
    </source>
</evidence>
<evidence type="ECO:0000305" key="2"/>
<name>RL22_ECO8A</name>
<comment type="function">
    <text evidence="1">This protein binds specifically to 23S rRNA; its binding is stimulated by other ribosomal proteins, e.g. L4, L17, and L20. It is important during the early stages of 50S assembly. It makes multiple contacts with different domains of the 23S rRNA in the assembled 50S subunit and ribosome (By similarity).</text>
</comment>
<comment type="function">
    <text evidence="1">The globular domain of the protein is located near the polypeptide exit tunnel on the outside of the subunit, while an extended beta-hairpin is found that lines the wall of the exit tunnel in the center of the 70S ribosome.</text>
</comment>
<comment type="subunit">
    <text evidence="1">Part of the 50S ribosomal subunit.</text>
</comment>
<comment type="similarity">
    <text evidence="1">Belongs to the universal ribosomal protein uL22 family.</text>
</comment>
<reference key="1">
    <citation type="journal article" date="2009" name="PLoS Genet.">
        <title>Organised genome dynamics in the Escherichia coli species results in highly diverse adaptive paths.</title>
        <authorList>
            <person name="Touchon M."/>
            <person name="Hoede C."/>
            <person name="Tenaillon O."/>
            <person name="Barbe V."/>
            <person name="Baeriswyl S."/>
            <person name="Bidet P."/>
            <person name="Bingen E."/>
            <person name="Bonacorsi S."/>
            <person name="Bouchier C."/>
            <person name="Bouvet O."/>
            <person name="Calteau A."/>
            <person name="Chiapello H."/>
            <person name="Clermont O."/>
            <person name="Cruveiller S."/>
            <person name="Danchin A."/>
            <person name="Diard M."/>
            <person name="Dossat C."/>
            <person name="Karoui M.E."/>
            <person name="Frapy E."/>
            <person name="Garry L."/>
            <person name="Ghigo J.M."/>
            <person name="Gilles A.M."/>
            <person name="Johnson J."/>
            <person name="Le Bouguenec C."/>
            <person name="Lescat M."/>
            <person name="Mangenot S."/>
            <person name="Martinez-Jehanne V."/>
            <person name="Matic I."/>
            <person name="Nassif X."/>
            <person name="Oztas S."/>
            <person name="Petit M.A."/>
            <person name="Pichon C."/>
            <person name="Rouy Z."/>
            <person name="Ruf C.S."/>
            <person name="Schneider D."/>
            <person name="Tourret J."/>
            <person name="Vacherie B."/>
            <person name="Vallenet D."/>
            <person name="Medigue C."/>
            <person name="Rocha E.P.C."/>
            <person name="Denamur E."/>
        </authorList>
    </citation>
    <scope>NUCLEOTIDE SEQUENCE [LARGE SCALE GENOMIC DNA]</scope>
    <source>
        <strain>IAI1</strain>
    </source>
</reference>
<dbReference type="EMBL" id="CU928160">
    <property type="protein sequence ID" value="CAR00266.1"/>
    <property type="molecule type" value="Genomic_DNA"/>
</dbReference>
<dbReference type="RefSeq" id="WP_000447529.1">
    <property type="nucleotide sequence ID" value="NC_011741.1"/>
</dbReference>
<dbReference type="SMR" id="B7M1M9"/>
<dbReference type="GeneID" id="93778672"/>
<dbReference type="KEGG" id="ecr:ECIAI1_3464"/>
<dbReference type="HOGENOM" id="CLU_083987_3_3_6"/>
<dbReference type="GO" id="GO:0022625">
    <property type="term" value="C:cytosolic large ribosomal subunit"/>
    <property type="evidence" value="ECO:0007669"/>
    <property type="project" value="TreeGrafter"/>
</dbReference>
<dbReference type="GO" id="GO:0019843">
    <property type="term" value="F:rRNA binding"/>
    <property type="evidence" value="ECO:0007669"/>
    <property type="project" value="UniProtKB-UniRule"/>
</dbReference>
<dbReference type="GO" id="GO:0003735">
    <property type="term" value="F:structural constituent of ribosome"/>
    <property type="evidence" value="ECO:0007669"/>
    <property type="project" value="InterPro"/>
</dbReference>
<dbReference type="GO" id="GO:0006412">
    <property type="term" value="P:translation"/>
    <property type="evidence" value="ECO:0007669"/>
    <property type="project" value="UniProtKB-UniRule"/>
</dbReference>
<dbReference type="CDD" id="cd00336">
    <property type="entry name" value="Ribosomal_L22"/>
    <property type="match status" value="1"/>
</dbReference>
<dbReference type="FunFam" id="3.90.470.10:FF:000001">
    <property type="entry name" value="50S ribosomal protein L22"/>
    <property type="match status" value="1"/>
</dbReference>
<dbReference type="Gene3D" id="3.90.470.10">
    <property type="entry name" value="Ribosomal protein L22/L17"/>
    <property type="match status" value="1"/>
</dbReference>
<dbReference type="HAMAP" id="MF_01331_B">
    <property type="entry name" value="Ribosomal_uL22_B"/>
    <property type="match status" value="1"/>
</dbReference>
<dbReference type="InterPro" id="IPR001063">
    <property type="entry name" value="Ribosomal_uL22"/>
</dbReference>
<dbReference type="InterPro" id="IPR005727">
    <property type="entry name" value="Ribosomal_uL22_bac/chlpt-type"/>
</dbReference>
<dbReference type="InterPro" id="IPR047867">
    <property type="entry name" value="Ribosomal_uL22_bac/org-type"/>
</dbReference>
<dbReference type="InterPro" id="IPR018260">
    <property type="entry name" value="Ribosomal_uL22_CS"/>
</dbReference>
<dbReference type="InterPro" id="IPR036394">
    <property type="entry name" value="Ribosomal_uL22_sf"/>
</dbReference>
<dbReference type="NCBIfam" id="TIGR01044">
    <property type="entry name" value="rplV_bact"/>
    <property type="match status" value="1"/>
</dbReference>
<dbReference type="PANTHER" id="PTHR13501">
    <property type="entry name" value="CHLOROPLAST 50S RIBOSOMAL PROTEIN L22-RELATED"/>
    <property type="match status" value="1"/>
</dbReference>
<dbReference type="PANTHER" id="PTHR13501:SF8">
    <property type="entry name" value="LARGE RIBOSOMAL SUBUNIT PROTEIN UL22M"/>
    <property type="match status" value="1"/>
</dbReference>
<dbReference type="Pfam" id="PF00237">
    <property type="entry name" value="Ribosomal_L22"/>
    <property type="match status" value="1"/>
</dbReference>
<dbReference type="SUPFAM" id="SSF54843">
    <property type="entry name" value="Ribosomal protein L22"/>
    <property type="match status" value="1"/>
</dbReference>
<dbReference type="PROSITE" id="PS00464">
    <property type="entry name" value="RIBOSOMAL_L22"/>
    <property type="match status" value="1"/>
</dbReference>
<gene>
    <name evidence="1" type="primary">rplV</name>
    <name type="ordered locus">ECIAI1_3464</name>
</gene>
<accession>B7M1M9</accession>
<sequence length="110" mass="12226">METIAKHRHARSSAQKVRLVADLIRGKKVSQALDILTYTNKKAAVLVKKVLESAIANAEHNDGADIDDLKVTKIFVDEGPSMKRIMPRAKGRADRILKRTSHITVVVSDR</sequence>
<feature type="chain" id="PRO_1000142257" description="Large ribosomal subunit protein uL22">
    <location>
        <begin position="1"/>
        <end position="110"/>
    </location>
</feature>
<proteinExistence type="inferred from homology"/>
<protein>
    <recommendedName>
        <fullName evidence="1">Large ribosomal subunit protein uL22</fullName>
    </recommendedName>
    <alternativeName>
        <fullName evidence="2">50S ribosomal protein L22</fullName>
    </alternativeName>
</protein>